<name>Y4628_STRCO</name>
<sequence>MAPKAPKWRELADRFAEQIRTGDYGPGEQLPQIRDLVEAGEGSKETVHRAYKALETEGLVAMSRGHGTVVRRKAPLKRLGIGRYDKAKWRDGDEVAFIADRVASGRSYRRNEQTQTVSRVKASAAVATALGLPEGADVYARARLVKEGTQPTHTLTSYYRPEHVEGTRIVDPTPGPAGRGGGFRVLYDAGYEIDHMTEEIFARVPSAEEAQLLQLAPGEWVVELHRTTRTVDGTVVEFAIGVHAGTRFAWSYDFKVPDSAMTEAEDESK</sequence>
<dbReference type="EMBL" id="X15866">
    <property type="protein sequence ID" value="CAA33875.1"/>
    <property type="status" value="ALT_INIT"/>
    <property type="molecule type" value="Genomic_DNA"/>
</dbReference>
<dbReference type="EMBL" id="AL939120">
    <property type="protein sequence ID" value="CAC08281.1"/>
    <property type="molecule type" value="Genomic_DNA"/>
</dbReference>
<dbReference type="PIR" id="JQ0322">
    <property type="entry name" value="JQ0322"/>
</dbReference>
<dbReference type="PIR" id="JQ0323">
    <property type="entry name" value="JQ0323"/>
</dbReference>
<dbReference type="RefSeq" id="NP_628790.1">
    <property type="nucleotide sequence ID" value="NC_003888.3"/>
</dbReference>
<dbReference type="RefSeq" id="WP_011029777.1">
    <property type="nucleotide sequence ID" value="NZ_VNID01000028.1"/>
</dbReference>
<dbReference type="SMR" id="Q04296"/>
<dbReference type="STRING" id="100226.gene:17762274"/>
<dbReference type="PaxDb" id="100226-SCO4628"/>
<dbReference type="KEGG" id="sco:SCO4628"/>
<dbReference type="PATRIC" id="fig|100226.15.peg.4701"/>
<dbReference type="eggNOG" id="COG2188">
    <property type="taxonomic scope" value="Bacteria"/>
</dbReference>
<dbReference type="HOGENOM" id="CLU_063236_8_1_11"/>
<dbReference type="InParanoid" id="Q04296"/>
<dbReference type="OrthoDB" id="120836at2"/>
<dbReference type="PhylomeDB" id="Q04296"/>
<dbReference type="Proteomes" id="UP000001973">
    <property type="component" value="Chromosome"/>
</dbReference>
<dbReference type="GO" id="GO:0003677">
    <property type="term" value="F:DNA binding"/>
    <property type="evidence" value="ECO:0007669"/>
    <property type="project" value="UniProtKB-KW"/>
</dbReference>
<dbReference type="GO" id="GO:0003700">
    <property type="term" value="F:DNA-binding transcription factor activity"/>
    <property type="evidence" value="ECO:0007669"/>
    <property type="project" value="InterPro"/>
</dbReference>
<dbReference type="GO" id="GO:0045892">
    <property type="term" value="P:negative regulation of DNA-templated transcription"/>
    <property type="evidence" value="ECO:0000318"/>
    <property type="project" value="GO_Central"/>
</dbReference>
<dbReference type="CDD" id="cd07377">
    <property type="entry name" value="WHTH_GntR"/>
    <property type="match status" value="1"/>
</dbReference>
<dbReference type="FunFam" id="3.40.1410.10:FF:000038">
    <property type="entry name" value="GntR family transcriptional regulator"/>
    <property type="match status" value="1"/>
</dbReference>
<dbReference type="Gene3D" id="3.40.1410.10">
    <property type="entry name" value="Chorismate lyase-like"/>
    <property type="match status" value="1"/>
</dbReference>
<dbReference type="Gene3D" id="1.10.10.10">
    <property type="entry name" value="Winged helix-like DNA-binding domain superfamily/Winged helix DNA-binding domain"/>
    <property type="match status" value="1"/>
</dbReference>
<dbReference type="InterPro" id="IPR050679">
    <property type="entry name" value="Bact_HTH_transcr_reg"/>
</dbReference>
<dbReference type="InterPro" id="IPR028978">
    <property type="entry name" value="Chorismate_lyase_/UTRA_dom_sf"/>
</dbReference>
<dbReference type="InterPro" id="IPR000524">
    <property type="entry name" value="Tscrpt_reg_HTH_GntR"/>
</dbReference>
<dbReference type="InterPro" id="IPR011663">
    <property type="entry name" value="UTRA"/>
</dbReference>
<dbReference type="InterPro" id="IPR036388">
    <property type="entry name" value="WH-like_DNA-bd_sf"/>
</dbReference>
<dbReference type="InterPro" id="IPR036390">
    <property type="entry name" value="WH_DNA-bd_sf"/>
</dbReference>
<dbReference type="PANTHER" id="PTHR44846:SF17">
    <property type="entry name" value="GNTR-FAMILY TRANSCRIPTIONAL REGULATOR"/>
    <property type="match status" value="1"/>
</dbReference>
<dbReference type="PANTHER" id="PTHR44846">
    <property type="entry name" value="MANNOSYL-D-GLYCERATE TRANSPORT/METABOLISM SYSTEM REPRESSOR MNGR-RELATED"/>
    <property type="match status" value="1"/>
</dbReference>
<dbReference type="Pfam" id="PF00392">
    <property type="entry name" value="GntR"/>
    <property type="match status" value="1"/>
</dbReference>
<dbReference type="Pfam" id="PF07702">
    <property type="entry name" value="UTRA"/>
    <property type="match status" value="1"/>
</dbReference>
<dbReference type="SMART" id="SM00345">
    <property type="entry name" value="HTH_GNTR"/>
    <property type="match status" value="1"/>
</dbReference>
<dbReference type="SMART" id="SM00866">
    <property type="entry name" value="UTRA"/>
    <property type="match status" value="1"/>
</dbReference>
<dbReference type="SUPFAM" id="SSF64288">
    <property type="entry name" value="Chorismate lyase-like"/>
    <property type="match status" value="1"/>
</dbReference>
<dbReference type="SUPFAM" id="SSF46785">
    <property type="entry name" value="Winged helix' DNA-binding domain"/>
    <property type="match status" value="1"/>
</dbReference>
<dbReference type="PROSITE" id="PS50949">
    <property type="entry name" value="HTH_GNTR"/>
    <property type="match status" value="1"/>
</dbReference>
<evidence type="ECO:0000255" key="1">
    <source>
        <dbReference type="PROSITE-ProRule" id="PRU00307"/>
    </source>
</evidence>
<evidence type="ECO:0000305" key="2"/>
<proteinExistence type="predicted"/>
<organism>
    <name type="scientific">Streptomyces coelicolor (strain ATCC BAA-471 / A3(2) / M145)</name>
    <dbReference type="NCBI Taxonomy" id="100226"/>
    <lineage>
        <taxon>Bacteria</taxon>
        <taxon>Bacillati</taxon>
        <taxon>Actinomycetota</taxon>
        <taxon>Actinomycetes</taxon>
        <taxon>Kitasatosporales</taxon>
        <taxon>Streptomycetaceae</taxon>
        <taxon>Streptomyces</taxon>
        <taxon>Streptomyces albidoflavus group</taxon>
    </lineage>
</organism>
<keyword id="KW-0238">DNA-binding</keyword>
<keyword id="KW-1185">Reference proteome</keyword>
<keyword id="KW-0804">Transcription</keyword>
<keyword id="KW-0805">Transcription regulation</keyword>
<reference key="1">
    <citation type="journal article" date="1989" name="Mol. Gen. Genet.">
        <title>Identification and characterization of a locus inhibiting extrachromosomal maintenance of the Streptomyces plasmid SLP1.</title>
        <authorList>
            <person name="Grant S.R."/>
            <person name="Lee S.C."/>
            <person name="Kendall K."/>
            <person name="Cohen S.N."/>
        </authorList>
    </citation>
    <scope>NUCLEOTIDE SEQUENCE [GENOMIC DNA]</scope>
</reference>
<reference key="2">
    <citation type="submission" date="1993-09" db="EMBL/GenBank/DDBJ databases">
        <authorList>
            <person name="Shiffman D."/>
            <person name="Cohen S.N."/>
        </authorList>
    </citation>
    <scope>SEQUENCE REVISION</scope>
</reference>
<reference key="3">
    <citation type="journal article" date="2002" name="Nature">
        <title>Complete genome sequence of the model actinomycete Streptomyces coelicolor A3(2).</title>
        <authorList>
            <person name="Bentley S.D."/>
            <person name="Chater K.F."/>
            <person name="Cerdeno-Tarraga A.-M."/>
            <person name="Challis G.L."/>
            <person name="Thomson N.R."/>
            <person name="James K.D."/>
            <person name="Harris D.E."/>
            <person name="Quail M.A."/>
            <person name="Kieser H."/>
            <person name="Harper D."/>
            <person name="Bateman A."/>
            <person name="Brown S."/>
            <person name="Chandra G."/>
            <person name="Chen C.W."/>
            <person name="Collins M."/>
            <person name="Cronin A."/>
            <person name="Fraser A."/>
            <person name="Goble A."/>
            <person name="Hidalgo J."/>
            <person name="Hornsby T."/>
            <person name="Howarth S."/>
            <person name="Huang C.-H."/>
            <person name="Kieser T."/>
            <person name="Larke L."/>
            <person name="Murphy L.D."/>
            <person name="Oliver K."/>
            <person name="O'Neil S."/>
            <person name="Rabbinowitsch E."/>
            <person name="Rajandream M.A."/>
            <person name="Rutherford K.M."/>
            <person name="Rutter S."/>
            <person name="Seeger K."/>
            <person name="Saunders D."/>
            <person name="Sharp S."/>
            <person name="Squares R."/>
            <person name="Squares S."/>
            <person name="Taylor K."/>
            <person name="Warren T."/>
            <person name="Wietzorrek A."/>
            <person name="Woodward J.R."/>
            <person name="Barrell B.G."/>
            <person name="Parkhill J."/>
            <person name="Hopwood D.A."/>
        </authorList>
    </citation>
    <scope>NUCLEOTIDE SEQUENCE [LARGE SCALE GENOMIC DNA]</scope>
    <source>
        <strain>ATCC BAA-471 / A3(2) / M145</strain>
    </source>
</reference>
<protein>
    <recommendedName>
        <fullName>Uncharacterized HTH-type transcriptional regulator SCO4628</fullName>
    </recommendedName>
</protein>
<gene>
    <name type="ordered locus">SCO4628</name>
    <name type="ORF">SCD39.28</name>
</gene>
<comment type="function">
    <text>The imp locus inhibits the extrachromosomal maintenance of the Streptomyces plasmid SLP1.</text>
</comment>
<comment type="sequence caution" evidence="2">
    <conflict type="erroneous initiation">
        <sequence resource="EMBL-CDS" id="CAA33875"/>
    </conflict>
</comment>
<accession>Q04296</accession>
<accession>Q04335</accession>
<accession>Q9F2T4</accession>
<feature type="chain" id="PRO_0000050704" description="Uncharacterized HTH-type transcriptional regulator SCO4628">
    <location>
        <begin position="1"/>
        <end position="269"/>
    </location>
</feature>
<feature type="domain" description="HTH gntR-type" evidence="1">
    <location>
        <begin position="5"/>
        <end position="73"/>
    </location>
</feature>
<feature type="DNA-binding region" description="H-T-H motif" evidence="1">
    <location>
        <begin position="33"/>
        <end position="52"/>
    </location>
</feature>